<dbReference type="EMBL" id="AK011543">
    <property type="protein sequence ID" value="BAB27686.1"/>
    <property type="molecule type" value="mRNA"/>
</dbReference>
<dbReference type="EMBL" id="AK031528">
    <property type="protein sequence ID" value="BAC27436.1"/>
    <property type="molecule type" value="mRNA"/>
</dbReference>
<dbReference type="EMBL" id="AK154283">
    <property type="protein sequence ID" value="BAE32487.1"/>
    <property type="molecule type" value="mRNA"/>
</dbReference>
<dbReference type="EMBL" id="BC056966">
    <property type="protein sequence ID" value="AAH56966.1"/>
    <property type="molecule type" value="mRNA"/>
</dbReference>
<dbReference type="CCDS" id="CCDS28160.1"/>
<dbReference type="RefSeq" id="NP_001342656.1">
    <property type="nucleotide sequence ID" value="NM_001355727.1"/>
</dbReference>
<dbReference type="RefSeq" id="NP_083088.1">
    <property type="nucleotide sequence ID" value="NM_028812.4"/>
</dbReference>
<dbReference type="RefSeq" id="XP_006522722.1">
    <property type="nucleotide sequence ID" value="XM_006522659.3"/>
</dbReference>
<dbReference type="SMR" id="Q9D0D5"/>
<dbReference type="BioGRID" id="216568">
    <property type="interactions" value="15"/>
</dbReference>
<dbReference type="FunCoup" id="Q9D0D5">
    <property type="interactions" value="4327"/>
</dbReference>
<dbReference type="IntAct" id="Q9D0D5">
    <property type="interactions" value="11"/>
</dbReference>
<dbReference type="MINT" id="Q9D0D5"/>
<dbReference type="STRING" id="10090.ENSMUSP00000023525"/>
<dbReference type="iPTMnet" id="Q9D0D5"/>
<dbReference type="PhosphoSitePlus" id="Q9D0D5"/>
<dbReference type="SwissPalm" id="Q9D0D5"/>
<dbReference type="PaxDb" id="10090-ENSMUSP00000023525"/>
<dbReference type="PeptideAtlas" id="Q9D0D5"/>
<dbReference type="ProteomicsDB" id="259333"/>
<dbReference type="Pumba" id="Q9D0D5"/>
<dbReference type="Antibodypedia" id="4082">
    <property type="antibodies" value="203 antibodies from 29 providers"/>
</dbReference>
<dbReference type="DNASU" id="74197"/>
<dbReference type="Ensembl" id="ENSMUST00000023525.9">
    <property type="protein sequence ID" value="ENSMUSP00000023525.9"/>
    <property type="gene ID" value="ENSMUSG00000022828.11"/>
</dbReference>
<dbReference type="GeneID" id="74197"/>
<dbReference type="KEGG" id="mmu:74197"/>
<dbReference type="UCSC" id="uc007zeb.1">
    <property type="organism name" value="mouse"/>
</dbReference>
<dbReference type="AGR" id="MGI:1921447"/>
<dbReference type="CTD" id="2960"/>
<dbReference type="MGI" id="MGI:1921447">
    <property type="gene designation" value="Gtf2e1"/>
</dbReference>
<dbReference type="VEuPathDB" id="HostDB:ENSMUSG00000022828"/>
<dbReference type="eggNOG" id="KOG2593">
    <property type="taxonomic scope" value="Eukaryota"/>
</dbReference>
<dbReference type="GeneTree" id="ENSGT00390000016696"/>
<dbReference type="HOGENOM" id="CLU_051021_1_0_1"/>
<dbReference type="InParanoid" id="Q9D0D5"/>
<dbReference type="OMA" id="DAIKWKV"/>
<dbReference type="OrthoDB" id="361102at2759"/>
<dbReference type="PhylomeDB" id="Q9D0D5"/>
<dbReference type="TreeFam" id="TF313429"/>
<dbReference type="Reactome" id="R-MMU-674695">
    <property type="pathway name" value="RNA Polymerase II Pre-transcription Events"/>
</dbReference>
<dbReference type="Reactome" id="R-MMU-6807505">
    <property type="pathway name" value="RNA polymerase II transcribes snRNA genes"/>
</dbReference>
<dbReference type="Reactome" id="R-MMU-73776">
    <property type="pathway name" value="RNA Polymerase II Promoter Escape"/>
</dbReference>
<dbReference type="Reactome" id="R-MMU-73779">
    <property type="pathway name" value="RNA Polymerase II Transcription Pre-Initiation And Promoter Opening"/>
</dbReference>
<dbReference type="Reactome" id="R-MMU-75953">
    <property type="pathway name" value="RNA Polymerase II Transcription Initiation"/>
</dbReference>
<dbReference type="Reactome" id="R-MMU-76042">
    <property type="pathway name" value="RNA Polymerase II Transcription Initiation And Promoter Clearance"/>
</dbReference>
<dbReference type="BioGRID-ORCS" id="74197">
    <property type="hits" value="15 hits in 77 CRISPR screens"/>
</dbReference>
<dbReference type="ChiTaRS" id="Gtf2e1">
    <property type="organism name" value="mouse"/>
</dbReference>
<dbReference type="PRO" id="PR:Q9D0D5"/>
<dbReference type="Proteomes" id="UP000000589">
    <property type="component" value="Chromosome 16"/>
</dbReference>
<dbReference type="RNAct" id="Q9D0D5">
    <property type="molecule type" value="protein"/>
</dbReference>
<dbReference type="Bgee" id="ENSMUSG00000022828">
    <property type="expression patterns" value="Expressed in manus and 239 other cell types or tissues"/>
</dbReference>
<dbReference type="GO" id="GO:0005829">
    <property type="term" value="C:cytosol"/>
    <property type="evidence" value="ECO:0007669"/>
    <property type="project" value="Ensembl"/>
</dbReference>
<dbReference type="GO" id="GO:0005669">
    <property type="term" value="C:transcription factor TFIID complex"/>
    <property type="evidence" value="ECO:0007669"/>
    <property type="project" value="Ensembl"/>
</dbReference>
<dbReference type="GO" id="GO:0016251">
    <property type="term" value="F:RNA polymerase II general transcription initiation factor activity"/>
    <property type="evidence" value="ECO:0007669"/>
    <property type="project" value="Ensembl"/>
</dbReference>
<dbReference type="GO" id="GO:0008270">
    <property type="term" value="F:zinc ion binding"/>
    <property type="evidence" value="ECO:0007669"/>
    <property type="project" value="UniProtKB-KW"/>
</dbReference>
<dbReference type="GO" id="GO:0006367">
    <property type="term" value="P:transcription initiation at RNA polymerase II promoter"/>
    <property type="evidence" value="ECO:0007669"/>
    <property type="project" value="InterPro"/>
</dbReference>
<dbReference type="FunFam" id="3.30.40.10:FF:000087">
    <property type="entry name" value="General transcription factor IIE subunit 1"/>
    <property type="match status" value="1"/>
</dbReference>
<dbReference type="Gene3D" id="6.10.140.1250">
    <property type="match status" value="1"/>
</dbReference>
<dbReference type="Gene3D" id="3.30.40.10">
    <property type="entry name" value="Zinc/RING finger domain, C3HC4 (zinc finger)"/>
    <property type="match status" value="1"/>
</dbReference>
<dbReference type="InterPro" id="IPR039997">
    <property type="entry name" value="TFE"/>
</dbReference>
<dbReference type="InterPro" id="IPR017919">
    <property type="entry name" value="TFIIE/TFIIEa_HTH"/>
</dbReference>
<dbReference type="InterPro" id="IPR002853">
    <property type="entry name" value="TFIIE_asu"/>
</dbReference>
<dbReference type="InterPro" id="IPR021600">
    <property type="entry name" value="TFIIE_asu_C"/>
</dbReference>
<dbReference type="InterPro" id="IPR024550">
    <property type="entry name" value="TFIIEa/SarR/Rpc3_HTH_dom"/>
</dbReference>
<dbReference type="InterPro" id="IPR013083">
    <property type="entry name" value="Znf_RING/FYVE/PHD"/>
</dbReference>
<dbReference type="InterPro" id="IPR013137">
    <property type="entry name" value="Znf_TFIIB"/>
</dbReference>
<dbReference type="PANTHER" id="PTHR13097:SF8">
    <property type="entry name" value="GENERAL TRANSCRIPTION FACTOR IIE SUBUNIT 1"/>
    <property type="match status" value="1"/>
</dbReference>
<dbReference type="PANTHER" id="PTHR13097">
    <property type="entry name" value="TRANSCRIPTION INITIATION FACTOR IIE, ALPHA SUBUNIT"/>
    <property type="match status" value="1"/>
</dbReference>
<dbReference type="Pfam" id="PF11521">
    <property type="entry name" value="TFIIE-A_C"/>
    <property type="match status" value="1"/>
</dbReference>
<dbReference type="Pfam" id="PF02002">
    <property type="entry name" value="TFIIE_alpha"/>
    <property type="match status" value="1"/>
</dbReference>
<dbReference type="Pfam" id="PF08271">
    <property type="entry name" value="Zn_Ribbon_TF"/>
    <property type="match status" value="1"/>
</dbReference>
<dbReference type="SMART" id="SM00531">
    <property type="entry name" value="TFIIE"/>
    <property type="match status" value="1"/>
</dbReference>
<dbReference type="SUPFAM" id="SSF57783">
    <property type="entry name" value="Zinc beta-ribbon"/>
    <property type="match status" value="1"/>
</dbReference>
<dbReference type="PROSITE" id="PS51344">
    <property type="entry name" value="HTH_TFE_IIE"/>
    <property type="match status" value="1"/>
</dbReference>
<keyword id="KW-0007">Acetylation</keyword>
<keyword id="KW-0479">Metal-binding</keyword>
<keyword id="KW-0539">Nucleus</keyword>
<keyword id="KW-0597">Phosphoprotein</keyword>
<keyword id="KW-1185">Reference proteome</keyword>
<keyword id="KW-0804">Transcription</keyword>
<keyword id="KW-0805">Transcription regulation</keyword>
<keyword id="KW-0862">Zinc</keyword>
<keyword id="KW-0863">Zinc-finger</keyword>
<feature type="initiator methionine" description="Removed" evidence="1">
    <location>
        <position position="1"/>
    </location>
</feature>
<feature type="chain" id="PRO_0000211223" description="General transcription factor IIE subunit 1">
    <location>
        <begin position="2"/>
        <end position="440"/>
    </location>
</feature>
<feature type="domain" description="HTH TFE/IIEalpha-type" evidence="3">
    <location>
        <begin position="14"/>
        <end position="104"/>
    </location>
</feature>
<feature type="zinc finger region" description="C4-type" evidence="2">
    <location>
        <begin position="129"/>
        <end position="157"/>
    </location>
</feature>
<feature type="region of interest" description="Disordered" evidence="4">
    <location>
        <begin position="333"/>
        <end position="395"/>
    </location>
</feature>
<feature type="compositionally biased region" description="Low complexity" evidence="4">
    <location>
        <begin position="333"/>
        <end position="353"/>
    </location>
</feature>
<feature type="compositionally biased region" description="Acidic residues" evidence="4">
    <location>
        <begin position="354"/>
        <end position="364"/>
    </location>
</feature>
<feature type="compositionally biased region" description="Acidic residues" evidence="4">
    <location>
        <begin position="381"/>
        <end position="393"/>
    </location>
</feature>
<feature type="binding site" evidence="1">
    <location>
        <position position="129"/>
    </location>
    <ligand>
        <name>Zn(2+)</name>
        <dbReference type="ChEBI" id="CHEBI:29105"/>
    </ligand>
</feature>
<feature type="binding site" evidence="1">
    <location>
        <position position="132"/>
    </location>
    <ligand>
        <name>Zn(2+)</name>
        <dbReference type="ChEBI" id="CHEBI:29105"/>
    </ligand>
</feature>
<feature type="binding site" evidence="1">
    <location>
        <position position="154"/>
    </location>
    <ligand>
        <name>Zn(2+)</name>
        <dbReference type="ChEBI" id="CHEBI:29105"/>
    </ligand>
</feature>
<feature type="binding site" evidence="1">
    <location>
        <position position="157"/>
    </location>
    <ligand>
        <name>Zn(2+)</name>
        <dbReference type="ChEBI" id="CHEBI:29105"/>
    </ligand>
</feature>
<feature type="modified residue" description="N-acetylalanine" evidence="1">
    <location>
        <position position="2"/>
    </location>
</feature>
<feature type="modified residue" description="N6-acetyllysine" evidence="1">
    <location>
        <position position="67"/>
    </location>
</feature>
<feature type="modified residue" description="Phosphoserine" evidence="1">
    <location>
        <position position="268"/>
    </location>
</feature>
<accession>Q9D0D5</accession>
<accession>Q544T0</accession>
<gene>
    <name type="primary">Gtf2e1</name>
</gene>
<sequence>MADPDVLTEVPAALKRLAKYVIRGFYGIEHVLALDILIRNPCVKEEDMLELLKFDRKQLRSVLNNLKGDKFIKCRMRVETAADGKTTRHNYYFINYRTLVNVVKYKLDHMRRRIETDERNSTNRASFKCPVCCSTFTDLEANQLFDPMTGTFRCTFCHTEVEEDESAMPKKDARTLLARFNEQIEPIYALLRETEDVNLAYEILEPEPTEIPALKQSKDRAATAAGAAGLAGGHHREAWTNKGPSYEDLYTQNVVINMDDQDDVHRPSLEGKAAKERPIWLRESTVQGAYSSEEMKEGGIDVDTFQEREEARAGPDDNEEVMRALLIHEKKTSSVTAGSVGAAAPVTAANGSDSESETSESDDDSPPRPAAAAPPHHHRDEDEEDEEFEEVADDPIVMVAGCPFSYSEVSQRPELVAQMTPEEKEAYIAMGQRMFEDLFE</sequence>
<protein>
    <recommendedName>
        <fullName>General transcription factor IIE subunit 1</fullName>
    </recommendedName>
    <alternativeName>
        <fullName>General transcription factor IIE 56 kDa subunit</fullName>
    </alternativeName>
    <alternativeName>
        <fullName>Transcription initiation factor IIE subunit alpha</fullName>
        <shortName>TFIIE-alpha</shortName>
    </alternativeName>
</protein>
<evidence type="ECO:0000250" key="1">
    <source>
        <dbReference type="UniProtKB" id="P29083"/>
    </source>
</evidence>
<evidence type="ECO:0000255" key="2"/>
<evidence type="ECO:0000255" key="3">
    <source>
        <dbReference type="PROSITE-ProRule" id="PRU00676"/>
    </source>
</evidence>
<evidence type="ECO:0000256" key="4">
    <source>
        <dbReference type="SAM" id="MobiDB-lite"/>
    </source>
</evidence>
<evidence type="ECO:0000305" key="5"/>
<proteinExistence type="evidence at protein level"/>
<organism>
    <name type="scientific">Mus musculus</name>
    <name type="common">Mouse</name>
    <dbReference type="NCBI Taxonomy" id="10090"/>
    <lineage>
        <taxon>Eukaryota</taxon>
        <taxon>Metazoa</taxon>
        <taxon>Chordata</taxon>
        <taxon>Craniata</taxon>
        <taxon>Vertebrata</taxon>
        <taxon>Euteleostomi</taxon>
        <taxon>Mammalia</taxon>
        <taxon>Eutheria</taxon>
        <taxon>Euarchontoglires</taxon>
        <taxon>Glires</taxon>
        <taxon>Rodentia</taxon>
        <taxon>Myomorpha</taxon>
        <taxon>Muroidea</taxon>
        <taxon>Muridae</taxon>
        <taxon>Murinae</taxon>
        <taxon>Mus</taxon>
        <taxon>Mus</taxon>
    </lineage>
</organism>
<reference key="1">
    <citation type="journal article" date="2005" name="Science">
        <title>The transcriptional landscape of the mammalian genome.</title>
        <authorList>
            <person name="Carninci P."/>
            <person name="Kasukawa T."/>
            <person name="Katayama S."/>
            <person name="Gough J."/>
            <person name="Frith M.C."/>
            <person name="Maeda N."/>
            <person name="Oyama R."/>
            <person name="Ravasi T."/>
            <person name="Lenhard B."/>
            <person name="Wells C."/>
            <person name="Kodzius R."/>
            <person name="Shimokawa K."/>
            <person name="Bajic V.B."/>
            <person name="Brenner S.E."/>
            <person name="Batalov S."/>
            <person name="Forrest A.R."/>
            <person name="Zavolan M."/>
            <person name="Davis M.J."/>
            <person name="Wilming L.G."/>
            <person name="Aidinis V."/>
            <person name="Allen J.E."/>
            <person name="Ambesi-Impiombato A."/>
            <person name="Apweiler R."/>
            <person name="Aturaliya R.N."/>
            <person name="Bailey T.L."/>
            <person name="Bansal M."/>
            <person name="Baxter L."/>
            <person name="Beisel K.W."/>
            <person name="Bersano T."/>
            <person name="Bono H."/>
            <person name="Chalk A.M."/>
            <person name="Chiu K.P."/>
            <person name="Choudhary V."/>
            <person name="Christoffels A."/>
            <person name="Clutterbuck D.R."/>
            <person name="Crowe M.L."/>
            <person name="Dalla E."/>
            <person name="Dalrymple B.P."/>
            <person name="de Bono B."/>
            <person name="Della Gatta G."/>
            <person name="di Bernardo D."/>
            <person name="Down T."/>
            <person name="Engstrom P."/>
            <person name="Fagiolini M."/>
            <person name="Faulkner G."/>
            <person name="Fletcher C.F."/>
            <person name="Fukushima T."/>
            <person name="Furuno M."/>
            <person name="Futaki S."/>
            <person name="Gariboldi M."/>
            <person name="Georgii-Hemming P."/>
            <person name="Gingeras T.R."/>
            <person name="Gojobori T."/>
            <person name="Green R.E."/>
            <person name="Gustincich S."/>
            <person name="Harbers M."/>
            <person name="Hayashi Y."/>
            <person name="Hensch T.K."/>
            <person name="Hirokawa N."/>
            <person name="Hill D."/>
            <person name="Huminiecki L."/>
            <person name="Iacono M."/>
            <person name="Ikeo K."/>
            <person name="Iwama A."/>
            <person name="Ishikawa T."/>
            <person name="Jakt M."/>
            <person name="Kanapin A."/>
            <person name="Katoh M."/>
            <person name="Kawasawa Y."/>
            <person name="Kelso J."/>
            <person name="Kitamura H."/>
            <person name="Kitano H."/>
            <person name="Kollias G."/>
            <person name="Krishnan S.P."/>
            <person name="Kruger A."/>
            <person name="Kummerfeld S.K."/>
            <person name="Kurochkin I.V."/>
            <person name="Lareau L.F."/>
            <person name="Lazarevic D."/>
            <person name="Lipovich L."/>
            <person name="Liu J."/>
            <person name="Liuni S."/>
            <person name="McWilliam S."/>
            <person name="Madan Babu M."/>
            <person name="Madera M."/>
            <person name="Marchionni L."/>
            <person name="Matsuda H."/>
            <person name="Matsuzawa S."/>
            <person name="Miki H."/>
            <person name="Mignone F."/>
            <person name="Miyake S."/>
            <person name="Morris K."/>
            <person name="Mottagui-Tabar S."/>
            <person name="Mulder N."/>
            <person name="Nakano N."/>
            <person name="Nakauchi H."/>
            <person name="Ng P."/>
            <person name="Nilsson R."/>
            <person name="Nishiguchi S."/>
            <person name="Nishikawa S."/>
            <person name="Nori F."/>
            <person name="Ohara O."/>
            <person name="Okazaki Y."/>
            <person name="Orlando V."/>
            <person name="Pang K.C."/>
            <person name="Pavan W.J."/>
            <person name="Pavesi G."/>
            <person name="Pesole G."/>
            <person name="Petrovsky N."/>
            <person name="Piazza S."/>
            <person name="Reed J."/>
            <person name="Reid J.F."/>
            <person name="Ring B.Z."/>
            <person name="Ringwald M."/>
            <person name="Rost B."/>
            <person name="Ruan Y."/>
            <person name="Salzberg S.L."/>
            <person name="Sandelin A."/>
            <person name="Schneider C."/>
            <person name="Schoenbach C."/>
            <person name="Sekiguchi K."/>
            <person name="Semple C.A."/>
            <person name="Seno S."/>
            <person name="Sessa L."/>
            <person name="Sheng Y."/>
            <person name="Shibata Y."/>
            <person name="Shimada H."/>
            <person name="Shimada K."/>
            <person name="Silva D."/>
            <person name="Sinclair B."/>
            <person name="Sperling S."/>
            <person name="Stupka E."/>
            <person name="Sugiura K."/>
            <person name="Sultana R."/>
            <person name="Takenaka Y."/>
            <person name="Taki K."/>
            <person name="Tammoja K."/>
            <person name="Tan S.L."/>
            <person name="Tang S."/>
            <person name="Taylor M.S."/>
            <person name="Tegner J."/>
            <person name="Teichmann S.A."/>
            <person name="Ueda H.R."/>
            <person name="van Nimwegen E."/>
            <person name="Verardo R."/>
            <person name="Wei C.L."/>
            <person name="Yagi K."/>
            <person name="Yamanishi H."/>
            <person name="Zabarovsky E."/>
            <person name="Zhu S."/>
            <person name="Zimmer A."/>
            <person name="Hide W."/>
            <person name="Bult C."/>
            <person name="Grimmond S.M."/>
            <person name="Teasdale R.D."/>
            <person name="Liu E.T."/>
            <person name="Brusic V."/>
            <person name="Quackenbush J."/>
            <person name="Wahlestedt C."/>
            <person name="Mattick J.S."/>
            <person name="Hume D.A."/>
            <person name="Kai C."/>
            <person name="Sasaki D."/>
            <person name="Tomaru Y."/>
            <person name="Fukuda S."/>
            <person name="Kanamori-Katayama M."/>
            <person name="Suzuki M."/>
            <person name="Aoki J."/>
            <person name="Arakawa T."/>
            <person name="Iida J."/>
            <person name="Imamura K."/>
            <person name="Itoh M."/>
            <person name="Kato T."/>
            <person name="Kawaji H."/>
            <person name="Kawagashira N."/>
            <person name="Kawashima T."/>
            <person name="Kojima M."/>
            <person name="Kondo S."/>
            <person name="Konno H."/>
            <person name="Nakano K."/>
            <person name="Ninomiya N."/>
            <person name="Nishio T."/>
            <person name="Okada M."/>
            <person name="Plessy C."/>
            <person name="Shibata K."/>
            <person name="Shiraki T."/>
            <person name="Suzuki S."/>
            <person name="Tagami M."/>
            <person name="Waki K."/>
            <person name="Watahiki A."/>
            <person name="Okamura-Oho Y."/>
            <person name="Suzuki H."/>
            <person name="Kawai J."/>
            <person name="Hayashizaki Y."/>
        </authorList>
    </citation>
    <scope>NUCLEOTIDE SEQUENCE [LARGE SCALE MRNA]</scope>
    <source>
        <strain>C57BL/6J</strain>
        <strain>NOD</strain>
        <tissue>Embryo</tissue>
    </source>
</reference>
<reference key="2">
    <citation type="journal article" date="2004" name="Genome Res.">
        <title>The status, quality, and expansion of the NIH full-length cDNA project: the Mammalian Gene Collection (MGC).</title>
        <authorList>
            <consortium name="The MGC Project Team"/>
        </authorList>
    </citation>
    <scope>NUCLEOTIDE SEQUENCE [LARGE SCALE MRNA]</scope>
    <source>
        <strain>C57BL/6J</strain>
        <tissue>Brain</tissue>
    </source>
</reference>
<reference key="3">
    <citation type="journal article" date="2010" name="Cell">
        <title>A tissue-specific atlas of mouse protein phosphorylation and expression.</title>
        <authorList>
            <person name="Huttlin E.L."/>
            <person name="Jedrychowski M.P."/>
            <person name="Elias J.E."/>
            <person name="Goswami T."/>
            <person name="Rad R."/>
            <person name="Beausoleil S.A."/>
            <person name="Villen J."/>
            <person name="Haas W."/>
            <person name="Sowa M.E."/>
            <person name="Gygi S.P."/>
        </authorList>
    </citation>
    <scope>IDENTIFICATION BY MASS SPECTROMETRY [LARGE SCALE ANALYSIS]</scope>
    <source>
        <tissue>Spleen</tissue>
        <tissue>Testis</tissue>
    </source>
</reference>
<comment type="function">
    <text>Recruits TFIIH to the initiation complex and stimulates the RNA polymerase II C-terminal domain kinase and DNA-dependent ATPase activities of TFIIH. Both TFIIH and TFIIE are required for promoter clearance by RNA polymerase.</text>
</comment>
<comment type="subunit">
    <text evidence="1">Tetramer of two alpha and two beta chains. Interacts with TAF6/TAFII80. Interacts with ATF7IP. Interacts with SND1. Part of TBP-based Pol II pre-initiation complex (PIC), in which Pol II core assembles with general transcription factors and other specific initiation factors including GTF2E1, GTF2E2, GTF2F1, GTF2F2, TCEA1, ERCC2, ERCC3, GTF2H2, GTF2H3, GTF2H4, GTF2H5, GTF2A1, GTF2A2, GTF2B and TBP; this large multi-subunit PIC complex mediates DNA unwinding and targets Pol II core to the transcription start site where the first phosphodiester bond forms.</text>
</comment>
<comment type="subcellular location">
    <subcellularLocation>
        <location evidence="1">Nucleus</location>
    </subcellularLocation>
</comment>
<comment type="similarity">
    <text evidence="5">Belongs to the TFIIE alpha subunit family.</text>
</comment>
<name>T2EA_MOUSE</name>